<proteinExistence type="evidence at transcript level"/>
<dbReference type="EC" id="3.4.11.-" evidence="8"/>
<dbReference type="RefSeq" id="XP_026932668.1">
    <property type="nucleotide sequence ID" value="XM_027076867.2"/>
</dbReference>
<dbReference type="SMR" id="A0A6J2ATK2"/>
<dbReference type="GlyCosmos" id="A0A6J2ATK2">
    <property type="glycosylation" value="13 sites, No reported glycans"/>
</dbReference>
<dbReference type="GeneID" id="106978918"/>
<dbReference type="Proteomes" id="UP000504626">
    <property type="component" value="Unplaced"/>
</dbReference>
<dbReference type="GO" id="GO:0005737">
    <property type="term" value="C:cytoplasm"/>
    <property type="evidence" value="ECO:0007669"/>
    <property type="project" value="TreeGrafter"/>
</dbReference>
<dbReference type="GO" id="GO:0005615">
    <property type="term" value="C:extracellular space"/>
    <property type="evidence" value="ECO:0007669"/>
    <property type="project" value="TreeGrafter"/>
</dbReference>
<dbReference type="GO" id="GO:0016020">
    <property type="term" value="C:membrane"/>
    <property type="evidence" value="ECO:0007669"/>
    <property type="project" value="UniProtKB-SubCell"/>
</dbReference>
<dbReference type="GO" id="GO:0070006">
    <property type="term" value="F:metalloaminopeptidase activity"/>
    <property type="evidence" value="ECO:0007669"/>
    <property type="project" value="TreeGrafter"/>
</dbReference>
<dbReference type="GO" id="GO:0042277">
    <property type="term" value="F:peptide binding"/>
    <property type="evidence" value="ECO:0007669"/>
    <property type="project" value="TreeGrafter"/>
</dbReference>
<dbReference type="GO" id="GO:0008270">
    <property type="term" value="F:zinc ion binding"/>
    <property type="evidence" value="ECO:0007669"/>
    <property type="project" value="InterPro"/>
</dbReference>
<dbReference type="GO" id="GO:0043171">
    <property type="term" value="P:peptide catabolic process"/>
    <property type="evidence" value="ECO:0007669"/>
    <property type="project" value="TreeGrafter"/>
</dbReference>
<dbReference type="GO" id="GO:0006508">
    <property type="term" value="P:proteolysis"/>
    <property type="evidence" value="ECO:0007669"/>
    <property type="project" value="UniProtKB-KW"/>
</dbReference>
<dbReference type="CDD" id="cd09601">
    <property type="entry name" value="M1_APN-Q_like"/>
    <property type="match status" value="1"/>
</dbReference>
<dbReference type="FunFam" id="1.10.390.10:FF:000015">
    <property type="entry name" value="Aminopeptidase"/>
    <property type="match status" value="1"/>
</dbReference>
<dbReference type="FunFam" id="1.25.50.20:FF:000006">
    <property type="entry name" value="Aminopeptidase"/>
    <property type="match status" value="1"/>
</dbReference>
<dbReference type="FunFam" id="2.60.40.1910:FF:000005">
    <property type="entry name" value="Aminopeptidase"/>
    <property type="match status" value="1"/>
</dbReference>
<dbReference type="FunFam" id="2.60.40.1730:FF:000012">
    <property type="entry name" value="Aminopeptidase N"/>
    <property type="match status" value="1"/>
</dbReference>
<dbReference type="Gene3D" id="1.25.50.20">
    <property type="match status" value="1"/>
</dbReference>
<dbReference type="Gene3D" id="2.60.40.1910">
    <property type="match status" value="1"/>
</dbReference>
<dbReference type="Gene3D" id="1.10.390.10">
    <property type="entry name" value="Neutral Protease Domain 2"/>
    <property type="match status" value="1"/>
</dbReference>
<dbReference type="Gene3D" id="2.60.40.1730">
    <property type="entry name" value="tricorn interacting facor f3 domain"/>
    <property type="match status" value="1"/>
</dbReference>
<dbReference type="InterPro" id="IPR045357">
    <property type="entry name" value="Aminopeptidase_N-like_N"/>
</dbReference>
<dbReference type="InterPro" id="IPR042097">
    <property type="entry name" value="Aminopeptidase_N-like_N_sf"/>
</dbReference>
<dbReference type="InterPro" id="IPR024571">
    <property type="entry name" value="ERAP1-like_C_dom"/>
</dbReference>
<dbReference type="InterPro" id="IPR034016">
    <property type="entry name" value="M1_APN-typ"/>
</dbReference>
<dbReference type="InterPro" id="IPR001930">
    <property type="entry name" value="Peptidase_M1"/>
</dbReference>
<dbReference type="InterPro" id="IPR050344">
    <property type="entry name" value="Peptidase_M1_aminopeptidases"/>
</dbReference>
<dbReference type="InterPro" id="IPR014782">
    <property type="entry name" value="Peptidase_M1_dom"/>
</dbReference>
<dbReference type="InterPro" id="IPR027268">
    <property type="entry name" value="Peptidase_M4/M1_CTD_sf"/>
</dbReference>
<dbReference type="PANTHER" id="PTHR11533:SF31">
    <property type="entry name" value="AMINOPEPTIDASE Q"/>
    <property type="match status" value="1"/>
</dbReference>
<dbReference type="PANTHER" id="PTHR11533">
    <property type="entry name" value="PROTEASE M1 ZINC METALLOPROTEASE"/>
    <property type="match status" value="1"/>
</dbReference>
<dbReference type="Pfam" id="PF11838">
    <property type="entry name" value="ERAP1_C"/>
    <property type="match status" value="1"/>
</dbReference>
<dbReference type="Pfam" id="PF01433">
    <property type="entry name" value="Peptidase_M1"/>
    <property type="match status" value="1"/>
</dbReference>
<dbReference type="Pfam" id="PF17900">
    <property type="entry name" value="Peptidase_M1_N"/>
    <property type="match status" value="1"/>
</dbReference>
<dbReference type="PRINTS" id="PR00756">
    <property type="entry name" value="ALADIPTASE"/>
</dbReference>
<dbReference type="SUPFAM" id="SSF63737">
    <property type="entry name" value="Leukotriene A4 hydrolase N-terminal domain"/>
    <property type="match status" value="1"/>
</dbReference>
<dbReference type="SUPFAM" id="SSF55486">
    <property type="entry name" value="Metalloproteases ('zincins'), catalytic domain"/>
    <property type="match status" value="1"/>
</dbReference>
<dbReference type="PROSITE" id="PS00142">
    <property type="entry name" value="ZINC_PROTEASE"/>
    <property type="match status" value="1"/>
</dbReference>
<reference key="1">
    <citation type="submission" date="2018-08" db="EMBL/GenBank/DDBJ databases">
        <authorList>
            <person name="Scott A."/>
            <person name="Pukazhenthi B."/>
            <person name="Koepfli K.-P."/>
            <person name="Mohr D."/>
            <person name="Crosier A."/>
            <person name="O'Brien S.J."/>
            <person name="Tamazian G."/>
            <person name="Dobrynin P."/>
            <person name="Komissarov A."/>
            <person name="Kliver S."/>
            <person name="Krasheninnikova K."/>
        </authorList>
    </citation>
    <scope>NUCLEOTIDE SEQUENCE [LARGE SCALE GENOMIC DNA]</scope>
</reference>
<reference key="2">
    <citation type="journal article" date="2012" name="Science">
        <title>Specifying and sustaining pigmentation patterns in domestic and wild cats.</title>
        <authorList>
            <person name="Kaelin C.B."/>
            <person name="Xu X."/>
            <person name="Hong L.Z."/>
            <person name="David V.A."/>
            <person name="McGowan K.A."/>
            <person name="Schmidt-Kuentzel A."/>
            <person name="Roelke M.E."/>
            <person name="Pino J."/>
            <person name="Pontius J."/>
            <person name="Cooper G.M."/>
            <person name="Manuel H."/>
            <person name="Swanson W.F."/>
            <person name="Marker L."/>
            <person name="Harper C.K."/>
            <person name="van Dyk A."/>
            <person name="Yue B."/>
            <person name="Mullikin J.C."/>
            <person name="Warren W.C."/>
            <person name="Eizirik E."/>
            <person name="Kos L."/>
            <person name="O'Brien S.J."/>
            <person name="Barsh G.S."/>
            <person name="Menotti-Raymond M."/>
        </authorList>
    </citation>
    <scope>FUNCTION</scope>
    <scope>TISSUE SPECIFICITY</scope>
    <scope>POLYMORPHISM</scope>
</reference>
<comment type="function">
    <text evidence="3 6">Metalloprotease which may be important for placentation by regulating biological activity of key peptides at the embryo-maternal interface (By similarity). Involved in coat pigmentation patterns. During skin development, may be required to establish the periodicity of tabby markings, initiating a pre-pattern at or before hair follicle development (PubMed:22997338).</text>
</comment>
<comment type="cofactor">
    <cofactor evidence="8">
        <name>Zn(2+)</name>
        <dbReference type="ChEBI" id="CHEBI:29105"/>
    </cofactor>
    <text evidence="2">Binds 1 zinc ion per subunit.</text>
</comment>
<comment type="subcellular location">
    <subcellularLocation>
        <location evidence="3">Membrane</location>
        <topology evidence="3">Single-pass type II membrane protein</topology>
    </subcellularLocation>
</comment>
<comment type="tissue specificity">
    <text evidence="6">Expressed in skin. Expression levels do not differ between dark and light skin areas.</text>
</comment>
<comment type="polymorphism">
    <text evidence="6">A frameshift variant at position 997 (p.Asn977LysfsTer110) has been shown to cosegregate with the king coat pattern, a rare phenotype in which spots coalesce into blotches and stripes. This polymorphism was not detected in almost 220 spotted cheetahs.</text>
</comment>
<comment type="similarity">
    <text evidence="8">Belongs to the peptidase M1 family.</text>
</comment>
<sequence>MGPPSSSGFYVSRAVALLLAALAAALLLALAVLAALYGRCARVQPSDLHHGGVPDAASSPRGTQEEQLPTWPPRPTREPAGTATPGHWRPPGPWDQLRLPPWLVPLHYELELWPRLRPNEFQSPTLSFTGRVNITVRCTAATARLLLHSLFLDCESAEVRGPLSSGPRDGAVGRVPVDDVWFAFDMQYMVLELGATLQPGSRYELQLSFSGLVYRDLREGLFFSIYTDQGERRALLASQMEPTFARSVFPCFDEPALKATFNITIIHHPSYGALSNMPKLGQSEKRDVNGSVWTITTFSTTPHMPTYLVALAICDYDHVSRTERGQEIRIWARKDAIANGNAAFALNITGPIFSFLEDLFNISYPLPKTDIIALPTFDNSAMENWGLLIFDESLLLMQPNDQVTDKKAVISFILSHEIGHQWFGNLVTMNWWNDIWLKEGFASYFEFGVINYFNPKFRRNEVFFSNILHHVLSEDHALVSRAVSLKVENFTETSEINELFDLFTYNKGASLARMLSSFLNENVFISALKSYLKTFSYSTAEQDDLWRHFQMVVDDQSKILLPAPVKSIMDRWTHQSGFPVITLNVSTGAMKQEPFYLGKVKNQTLLTHNDTWIVPILWIKNGITQSLVWLDKSSKIFPEMQVSDSDHDWVILNLNMTGYYRVNYDKVGWKKLKQQLEKDPKAIPVIHRLQMIDDAFSLSKNNYVEIETALDLTKYLAEEDEIIVWYAVLVNLVTKDLVFDVNNYDMYPLLKKYLLKRLISIWNMYSTVIRENVAALQDDYLALVALEKLFETACWLGLEDCLQLSRELFKNWTNHPENEIPYPIKSVVLCYGVAFGSDEEWDFLLNMYSNKTKEEERIQLTYAMSCSKDPWILHRYLEYAVTAAPFTFNETNIMEVVAESEVGRYIVKDFLINNWQAVSERYGTQSLVNLMYIIGRTISTDLQITELQQFFSNMLEEHQKLTVRAKLQTIKNKNLGNKKLNARMTAWLRKNT</sequence>
<protein>
    <recommendedName>
        <fullName>Aminopeptidase Q</fullName>
        <ecNumber evidence="8">3.4.11.-</ecNumber>
    </recommendedName>
    <alternativeName>
        <fullName>Laeverin</fullName>
    </alternativeName>
    <alternativeName>
        <fullName>Tabulin</fullName>
    </alternativeName>
    <alternativeName>
        <fullName evidence="7">Transmembrane Aminopeptidase Q</fullName>
    </alternativeName>
</protein>
<feature type="initiator methionine" description="Removed" evidence="3">
    <location>
        <position position="1"/>
    </location>
</feature>
<feature type="chain" id="PRO_0000452324" description="Aminopeptidase Q">
    <location>
        <begin position="2"/>
        <end position="992"/>
    </location>
</feature>
<feature type="topological domain" description="Cytoplasmic" evidence="8">
    <location>
        <begin position="2"/>
        <end position="13"/>
    </location>
</feature>
<feature type="transmembrane region" description="Helical; Signal-anchor for type II membrane protein" evidence="4">
    <location>
        <begin position="14"/>
        <end position="34"/>
    </location>
</feature>
<feature type="topological domain" description="Extracellular" evidence="8">
    <location>
        <begin position="35"/>
        <end position="992"/>
    </location>
</feature>
<feature type="region of interest" description="Disordered" evidence="5">
    <location>
        <begin position="48"/>
        <end position="92"/>
    </location>
</feature>
<feature type="active site" description="Proton acceptor" evidence="8">
    <location>
        <position position="417"/>
    </location>
</feature>
<feature type="active site" description="Proton donor" evidence="8">
    <location>
        <position position="505"/>
    </location>
</feature>
<feature type="binding site" evidence="1">
    <location>
        <position position="241"/>
    </location>
    <ligand>
        <name>substrate</name>
    </ligand>
</feature>
<feature type="binding site" evidence="1">
    <location>
        <begin position="380"/>
        <end position="384"/>
    </location>
    <ligand>
        <name>substrate</name>
    </ligand>
</feature>
<feature type="binding site" evidence="8">
    <location>
        <position position="416"/>
    </location>
    <ligand>
        <name>Zn(2+)</name>
        <dbReference type="ChEBI" id="CHEBI:29105"/>
        <note>catalytic</note>
    </ligand>
</feature>
<feature type="binding site" evidence="8">
    <location>
        <position position="420"/>
    </location>
    <ligand>
        <name>Zn(2+)</name>
        <dbReference type="ChEBI" id="CHEBI:29105"/>
        <note>catalytic</note>
    </ligand>
</feature>
<feature type="binding site" evidence="8">
    <location>
        <position position="439"/>
    </location>
    <ligand>
        <name>Zn(2+)</name>
        <dbReference type="ChEBI" id="CHEBI:29105"/>
        <note>catalytic</note>
    </ligand>
</feature>
<feature type="site" description="Transition state stabilizer" evidence="1">
    <location>
        <position position="505"/>
    </location>
</feature>
<feature type="glycosylation site" description="N-linked (GlcNAc...) asparagine" evidence="4">
    <location>
        <position position="133"/>
    </location>
</feature>
<feature type="glycosylation site" description="N-linked (GlcNAc...) asparagine" evidence="4">
    <location>
        <position position="262"/>
    </location>
</feature>
<feature type="glycosylation site" description="N-linked (GlcNAc...) asparagine" evidence="4">
    <location>
        <position position="289"/>
    </location>
</feature>
<feature type="glycosylation site" description="N-linked (GlcNAc...) asparagine" evidence="4">
    <location>
        <position position="347"/>
    </location>
</feature>
<feature type="glycosylation site" description="N-linked (GlcNAc...) asparagine" evidence="4">
    <location>
        <position position="361"/>
    </location>
</feature>
<feature type="glycosylation site" description="N-linked (GlcNAc...) asparagine" evidence="4">
    <location>
        <position position="489"/>
    </location>
</feature>
<feature type="glycosylation site" description="N-linked (GlcNAc...) asparagine" evidence="4">
    <location>
        <position position="584"/>
    </location>
</feature>
<feature type="glycosylation site" description="N-linked (GlcNAc...) asparagine" evidence="4">
    <location>
        <position position="602"/>
    </location>
</feature>
<feature type="glycosylation site" description="N-linked (GlcNAc...) asparagine" evidence="4">
    <location>
        <position position="609"/>
    </location>
</feature>
<feature type="glycosylation site" description="N-linked (GlcNAc...) asparagine" evidence="4">
    <location>
        <position position="655"/>
    </location>
</feature>
<feature type="glycosylation site" description="N-linked (GlcNAc...) asparagine" evidence="4">
    <location>
        <position position="811"/>
    </location>
</feature>
<feature type="glycosylation site" description="N-linked (GlcNAc...) asparagine" evidence="4">
    <location>
        <position position="850"/>
    </location>
</feature>
<feature type="glycosylation site" description="N-linked (GlcNAc...) asparagine" evidence="4">
    <location>
        <position position="889"/>
    </location>
</feature>
<name>AMPQ_ACIJB</name>
<organism>
    <name type="scientific">Acinonyx jubatus</name>
    <name type="common">Cheetah</name>
    <dbReference type="NCBI Taxonomy" id="32536"/>
    <lineage>
        <taxon>Eukaryota</taxon>
        <taxon>Metazoa</taxon>
        <taxon>Chordata</taxon>
        <taxon>Craniata</taxon>
        <taxon>Vertebrata</taxon>
        <taxon>Euteleostomi</taxon>
        <taxon>Mammalia</taxon>
        <taxon>Eutheria</taxon>
        <taxon>Laurasiatheria</taxon>
        <taxon>Carnivora</taxon>
        <taxon>Feliformia</taxon>
        <taxon>Felidae</taxon>
        <taxon>Felinae</taxon>
        <taxon>Acinonyx</taxon>
    </lineage>
</organism>
<accession>A0A6J2ATK2</accession>
<keyword id="KW-0031">Aminopeptidase</keyword>
<keyword id="KW-0217">Developmental protein</keyword>
<keyword id="KW-0325">Glycoprotein</keyword>
<keyword id="KW-0378">Hydrolase</keyword>
<keyword id="KW-0472">Membrane</keyword>
<keyword id="KW-0479">Metal-binding</keyword>
<keyword id="KW-0482">Metalloprotease</keyword>
<keyword id="KW-0645">Protease</keyword>
<keyword id="KW-1185">Reference proteome</keyword>
<keyword id="KW-0735">Signal-anchor</keyword>
<keyword id="KW-0812">Transmembrane</keyword>
<keyword id="KW-1133">Transmembrane helix</keyword>
<keyword id="KW-0862">Zinc</keyword>
<gene>
    <name type="primary">LVRN</name>
    <name evidence="7" type="synonym">TAQPEP</name>
</gene>
<evidence type="ECO:0000250" key="1"/>
<evidence type="ECO:0000250" key="2">
    <source>
        <dbReference type="UniProtKB" id="M3XFH7"/>
    </source>
</evidence>
<evidence type="ECO:0000250" key="3">
    <source>
        <dbReference type="UniProtKB" id="Q6Q4G3"/>
    </source>
</evidence>
<evidence type="ECO:0000255" key="4"/>
<evidence type="ECO:0000256" key="5">
    <source>
        <dbReference type="SAM" id="MobiDB-lite"/>
    </source>
</evidence>
<evidence type="ECO:0000269" key="6">
    <source>
    </source>
</evidence>
<evidence type="ECO:0000303" key="7">
    <source>
    </source>
</evidence>
<evidence type="ECO:0000305" key="8"/>